<comment type="function">
    <text evidence="1">Required for O(2)-independent ubiquinone (coenzyme Q) biosynthesis. Likely functions as an accessory factor.</text>
</comment>
<comment type="pathway">
    <text evidence="1">Cofactor biosynthesis; ubiquinone biosynthesis.</text>
</comment>
<comment type="similarity">
    <text evidence="1">Belongs to the UbiT family.</text>
</comment>
<evidence type="ECO:0000255" key="1">
    <source>
        <dbReference type="HAMAP-Rule" id="MF_02231"/>
    </source>
</evidence>
<keyword id="KW-1185">Reference proteome</keyword>
<keyword id="KW-0831">Ubiquinone biosynthesis</keyword>
<accession>P64601</accession>
<accession>P45474</accession>
<gene>
    <name evidence="1" type="primary">ubiT</name>
    <name type="synonym">yhbT</name>
    <name type="ordered locus">Z4518</name>
    <name type="ordered locus">ECs4038</name>
</gene>
<sequence>MLDKLRSRIVHLGPSLLSVPVKLTPFALKRQVLEQVLSWQFRQALDDGELEFLEGRWLSIHVRDIDLQWFTSVVNGKLVVSQNAQADVSFSADASDLLMIAARKQDPDTLFFQRRLVIEGDTELGLYVKNLMDAIELEQMPKALRMMLLQLADFVEAGMKTAPETKQTSVGEPC</sequence>
<dbReference type="EMBL" id="AE005174">
    <property type="protein sequence ID" value="AAG58293.1"/>
    <property type="molecule type" value="Genomic_DNA"/>
</dbReference>
<dbReference type="EMBL" id="BA000007">
    <property type="protein sequence ID" value="BAB37461.1"/>
    <property type="molecule type" value="Genomic_DNA"/>
</dbReference>
<dbReference type="PIR" id="A85979">
    <property type="entry name" value="A85979"/>
</dbReference>
<dbReference type="PIR" id="F91133">
    <property type="entry name" value="F91133"/>
</dbReference>
<dbReference type="RefSeq" id="NP_312065.1">
    <property type="nucleotide sequence ID" value="NC_002695.1"/>
</dbReference>
<dbReference type="RefSeq" id="WP_001295552.1">
    <property type="nucleotide sequence ID" value="NZ_VOAI01000014.1"/>
</dbReference>
<dbReference type="SMR" id="P64601"/>
<dbReference type="STRING" id="155864.Z4518"/>
<dbReference type="GeneID" id="916123"/>
<dbReference type="KEGG" id="ece:Z4518"/>
<dbReference type="KEGG" id="ecs:ECs_4038"/>
<dbReference type="PATRIC" id="fig|386585.9.peg.4217"/>
<dbReference type="eggNOG" id="COG3154">
    <property type="taxonomic scope" value="Bacteria"/>
</dbReference>
<dbReference type="HOGENOM" id="CLU_111894_1_0_6"/>
<dbReference type="OMA" id="RDIGLQW"/>
<dbReference type="UniPathway" id="UPA00232"/>
<dbReference type="Proteomes" id="UP000000558">
    <property type="component" value="Chromosome"/>
</dbReference>
<dbReference type="Proteomes" id="UP000002519">
    <property type="component" value="Chromosome"/>
</dbReference>
<dbReference type="GO" id="GO:0005829">
    <property type="term" value="C:cytosol"/>
    <property type="evidence" value="ECO:0007669"/>
    <property type="project" value="TreeGrafter"/>
</dbReference>
<dbReference type="GO" id="GO:0006744">
    <property type="term" value="P:ubiquinone biosynthetic process"/>
    <property type="evidence" value="ECO:0007669"/>
    <property type="project" value="UniProtKB-UniRule"/>
</dbReference>
<dbReference type="FunFam" id="3.30.1050.10:FF:000002">
    <property type="entry name" value="SCP2 domain-containing protein YhbT"/>
    <property type="match status" value="1"/>
</dbReference>
<dbReference type="Gene3D" id="3.30.1050.10">
    <property type="entry name" value="SCP2 sterol-binding domain"/>
    <property type="match status" value="1"/>
</dbReference>
<dbReference type="HAMAP" id="MF_02231">
    <property type="entry name" value="UbiT"/>
    <property type="match status" value="1"/>
</dbReference>
<dbReference type="InterPro" id="IPR003033">
    <property type="entry name" value="SCP2_sterol-bd_dom"/>
</dbReference>
<dbReference type="InterPro" id="IPR036527">
    <property type="entry name" value="SCP2_sterol-bd_dom_sf"/>
</dbReference>
<dbReference type="InterPro" id="IPR016830">
    <property type="entry name" value="UbiT"/>
</dbReference>
<dbReference type="PANTHER" id="PTHR10094:SF25">
    <property type="entry name" value="SCP2 STEROL-BINDING DOMAIN-CONTAINING PROTEIN 1"/>
    <property type="match status" value="1"/>
</dbReference>
<dbReference type="PANTHER" id="PTHR10094">
    <property type="entry name" value="STEROL CARRIER PROTEIN 2 SCP-2 FAMILY PROTEIN"/>
    <property type="match status" value="1"/>
</dbReference>
<dbReference type="Pfam" id="PF02036">
    <property type="entry name" value="SCP2"/>
    <property type="match status" value="1"/>
</dbReference>
<dbReference type="PIRSF" id="PIRSF025550">
    <property type="entry name" value="UCP025550_lpd_carrier"/>
    <property type="match status" value="1"/>
</dbReference>
<dbReference type="SUPFAM" id="SSF55718">
    <property type="entry name" value="SCP-like"/>
    <property type="match status" value="1"/>
</dbReference>
<reference key="1">
    <citation type="journal article" date="2001" name="Nature">
        <title>Genome sequence of enterohaemorrhagic Escherichia coli O157:H7.</title>
        <authorList>
            <person name="Perna N.T."/>
            <person name="Plunkett G. III"/>
            <person name="Burland V."/>
            <person name="Mau B."/>
            <person name="Glasner J.D."/>
            <person name="Rose D.J."/>
            <person name="Mayhew G.F."/>
            <person name="Evans P.S."/>
            <person name="Gregor J."/>
            <person name="Kirkpatrick H.A."/>
            <person name="Posfai G."/>
            <person name="Hackett J."/>
            <person name="Klink S."/>
            <person name="Boutin A."/>
            <person name="Shao Y."/>
            <person name="Miller L."/>
            <person name="Grotbeck E.J."/>
            <person name="Davis N.W."/>
            <person name="Lim A."/>
            <person name="Dimalanta E.T."/>
            <person name="Potamousis K."/>
            <person name="Apodaca J."/>
            <person name="Anantharaman T.S."/>
            <person name="Lin J."/>
            <person name="Yen G."/>
            <person name="Schwartz D.C."/>
            <person name="Welch R.A."/>
            <person name="Blattner F.R."/>
        </authorList>
    </citation>
    <scope>NUCLEOTIDE SEQUENCE [LARGE SCALE GENOMIC DNA]</scope>
    <source>
        <strain>O157:H7 / EDL933 / ATCC 700927 / EHEC</strain>
    </source>
</reference>
<reference key="2">
    <citation type="journal article" date="2001" name="DNA Res.">
        <title>Complete genome sequence of enterohemorrhagic Escherichia coli O157:H7 and genomic comparison with a laboratory strain K-12.</title>
        <authorList>
            <person name="Hayashi T."/>
            <person name="Makino K."/>
            <person name="Ohnishi M."/>
            <person name="Kurokawa K."/>
            <person name="Ishii K."/>
            <person name="Yokoyama K."/>
            <person name="Han C.-G."/>
            <person name="Ohtsubo E."/>
            <person name="Nakayama K."/>
            <person name="Murata T."/>
            <person name="Tanaka M."/>
            <person name="Tobe T."/>
            <person name="Iida T."/>
            <person name="Takami H."/>
            <person name="Honda T."/>
            <person name="Sasakawa C."/>
            <person name="Ogasawara N."/>
            <person name="Yasunaga T."/>
            <person name="Kuhara S."/>
            <person name="Shiba T."/>
            <person name="Hattori M."/>
            <person name="Shinagawa H."/>
        </authorList>
    </citation>
    <scope>NUCLEOTIDE SEQUENCE [LARGE SCALE GENOMIC DNA]</scope>
    <source>
        <strain>O157:H7 / Sakai / RIMD 0509952 / EHEC</strain>
    </source>
</reference>
<proteinExistence type="inferred from homology"/>
<protein>
    <recommendedName>
        <fullName evidence="1">Ubiquinone biosynthesis accessory factor UbiT</fullName>
    </recommendedName>
</protein>
<name>UBIT_ECO57</name>
<feature type="chain" id="PRO_0000169457" description="Ubiquinone biosynthesis accessory factor UbiT">
    <location>
        <begin position="1"/>
        <end position="174"/>
    </location>
</feature>
<feature type="domain" description="SCP2" evidence="1">
    <location>
        <begin position="45"/>
        <end position="133"/>
    </location>
</feature>
<organism>
    <name type="scientific">Escherichia coli O157:H7</name>
    <dbReference type="NCBI Taxonomy" id="83334"/>
    <lineage>
        <taxon>Bacteria</taxon>
        <taxon>Pseudomonadati</taxon>
        <taxon>Pseudomonadota</taxon>
        <taxon>Gammaproteobacteria</taxon>
        <taxon>Enterobacterales</taxon>
        <taxon>Enterobacteriaceae</taxon>
        <taxon>Escherichia</taxon>
    </lineage>
</organism>